<organism>
    <name type="scientific">Neosartorya fischeri (strain ATCC 1020 / DSM 3700 / CBS 544.65 / FGSC A1164 / JCM 1740 / NRRL 181 / WB 181)</name>
    <name type="common">Aspergillus fischerianus</name>
    <dbReference type="NCBI Taxonomy" id="331117"/>
    <lineage>
        <taxon>Eukaryota</taxon>
        <taxon>Fungi</taxon>
        <taxon>Dikarya</taxon>
        <taxon>Ascomycota</taxon>
        <taxon>Pezizomycotina</taxon>
        <taxon>Eurotiomycetes</taxon>
        <taxon>Eurotiomycetidae</taxon>
        <taxon>Eurotiales</taxon>
        <taxon>Aspergillaceae</taxon>
        <taxon>Aspergillus</taxon>
        <taxon>Aspergillus subgen. Fumigati</taxon>
    </lineage>
</organism>
<keyword id="KW-0333">Golgi apparatus</keyword>
<keyword id="KW-0472">Membrane</keyword>
<keyword id="KW-1185">Reference proteome</keyword>
<keyword id="KW-0812">Transmembrane</keyword>
<keyword id="KW-1133">Transmembrane helix</keyword>
<protein>
    <recommendedName>
        <fullName>Golgi apparatus membrane protein tvp23</fullName>
    </recommendedName>
</protein>
<proteinExistence type="inferred from homology"/>
<comment type="function">
    <text evidence="1">Golgi membrane protein involved in vesicular trafficking.</text>
</comment>
<comment type="subcellular location">
    <subcellularLocation>
        <location evidence="1">Golgi apparatus membrane</location>
        <topology evidence="1">Multi-pass membrane protein</topology>
    </subcellularLocation>
</comment>
<comment type="similarity">
    <text evidence="3">Belongs to the TVP23 family.</text>
</comment>
<gene>
    <name type="primary">tvp23</name>
    <name type="ORF">NFIA_103310</name>
</gene>
<accession>A1CW41</accession>
<evidence type="ECO:0000250" key="1"/>
<evidence type="ECO:0000255" key="2"/>
<evidence type="ECO:0000305" key="3"/>
<name>TVP23_NEOFI</name>
<reference key="1">
    <citation type="journal article" date="2008" name="PLoS Genet.">
        <title>Genomic islands in the pathogenic filamentous fungus Aspergillus fumigatus.</title>
        <authorList>
            <person name="Fedorova N.D."/>
            <person name="Khaldi N."/>
            <person name="Joardar V.S."/>
            <person name="Maiti R."/>
            <person name="Amedeo P."/>
            <person name="Anderson M.J."/>
            <person name="Crabtree J."/>
            <person name="Silva J.C."/>
            <person name="Badger J.H."/>
            <person name="Albarraq A."/>
            <person name="Angiuoli S."/>
            <person name="Bussey H."/>
            <person name="Bowyer P."/>
            <person name="Cotty P.J."/>
            <person name="Dyer P.S."/>
            <person name="Egan A."/>
            <person name="Galens K."/>
            <person name="Fraser-Liggett C.M."/>
            <person name="Haas B.J."/>
            <person name="Inman J.M."/>
            <person name="Kent R."/>
            <person name="Lemieux S."/>
            <person name="Malavazi I."/>
            <person name="Orvis J."/>
            <person name="Roemer T."/>
            <person name="Ronning C.M."/>
            <person name="Sundaram J.P."/>
            <person name="Sutton G."/>
            <person name="Turner G."/>
            <person name="Venter J.C."/>
            <person name="White O.R."/>
            <person name="Whitty B.R."/>
            <person name="Youngman P."/>
            <person name="Wolfe K.H."/>
            <person name="Goldman G.H."/>
            <person name="Wortman J.R."/>
            <person name="Jiang B."/>
            <person name="Denning D.W."/>
            <person name="Nierman W.C."/>
        </authorList>
    </citation>
    <scope>NUCLEOTIDE SEQUENCE [LARGE SCALE GENOMIC DNA]</scope>
    <source>
        <strain>ATCC 1020 / DSM 3700 / CBS 544.65 / FGSC A1164 / JCM 1740 / NRRL 181 / WB 181</strain>
    </source>
</reference>
<feature type="chain" id="PRO_0000343050" description="Golgi apparatus membrane protein tvp23">
    <location>
        <begin position="1"/>
        <end position="191"/>
    </location>
</feature>
<feature type="transmembrane region" description="Helical" evidence="2">
    <location>
        <begin position="16"/>
        <end position="36"/>
    </location>
</feature>
<feature type="transmembrane region" description="Helical" evidence="2">
    <location>
        <begin position="38"/>
        <end position="58"/>
    </location>
</feature>
<feature type="transmembrane region" description="Helical" evidence="2">
    <location>
        <begin position="110"/>
        <end position="130"/>
    </location>
</feature>
<feature type="transmembrane region" description="Helical" evidence="2">
    <location>
        <begin position="136"/>
        <end position="156"/>
    </location>
</feature>
<dbReference type="EMBL" id="DS027685">
    <property type="protein sequence ID" value="EAW24843.1"/>
    <property type="molecule type" value="Genomic_DNA"/>
</dbReference>
<dbReference type="RefSeq" id="XP_001266740.1">
    <property type="nucleotide sequence ID" value="XM_001266739.1"/>
</dbReference>
<dbReference type="STRING" id="331117.A1CW41"/>
<dbReference type="EnsemblFungi" id="EAW24843">
    <property type="protein sequence ID" value="EAW24843"/>
    <property type="gene ID" value="NFIA_103310"/>
</dbReference>
<dbReference type="GeneID" id="4593274"/>
<dbReference type="KEGG" id="nfi:NFIA_103310"/>
<dbReference type="VEuPathDB" id="FungiDB:NFIA_103310"/>
<dbReference type="eggNOG" id="KOG3195">
    <property type="taxonomic scope" value="Eukaryota"/>
</dbReference>
<dbReference type="HOGENOM" id="CLU_074845_1_1_1"/>
<dbReference type="OMA" id="KMIWWID"/>
<dbReference type="OrthoDB" id="2151161at2759"/>
<dbReference type="Proteomes" id="UP000006702">
    <property type="component" value="Unassembled WGS sequence"/>
</dbReference>
<dbReference type="GO" id="GO:0000139">
    <property type="term" value="C:Golgi membrane"/>
    <property type="evidence" value="ECO:0007669"/>
    <property type="project" value="UniProtKB-SubCell"/>
</dbReference>
<dbReference type="GO" id="GO:0009306">
    <property type="term" value="P:protein secretion"/>
    <property type="evidence" value="ECO:0007669"/>
    <property type="project" value="TreeGrafter"/>
</dbReference>
<dbReference type="GO" id="GO:0016192">
    <property type="term" value="P:vesicle-mediated transport"/>
    <property type="evidence" value="ECO:0007669"/>
    <property type="project" value="EnsemblFungi"/>
</dbReference>
<dbReference type="InterPro" id="IPR008564">
    <property type="entry name" value="TVP23-like"/>
</dbReference>
<dbReference type="PANTHER" id="PTHR13019">
    <property type="entry name" value="GOLGI APPARATUS MEMBRANE PROTEIN TVP23"/>
    <property type="match status" value="1"/>
</dbReference>
<dbReference type="PANTHER" id="PTHR13019:SF7">
    <property type="entry name" value="GOLGI APPARATUS MEMBRANE PROTEIN TVP23"/>
    <property type="match status" value="1"/>
</dbReference>
<dbReference type="Pfam" id="PF05832">
    <property type="entry name" value="DUF846"/>
    <property type="match status" value="1"/>
</dbReference>
<sequence>MDQPLQAQQGELNWRLSAHPITLLFFLGFRTSALLMYLFGVLFIKNFVLVFILTLLLLSADFYYLKNIAGRRLVGLRWWNEVNTATGDSHWVFESSDPATRTISATDKRFFWLSLYVTPALWIGLAVLAIVRLSSVIWLSLVAIALVLTITNTVAFSRCDRFSQASTYASRAFGGNIVNNLAGGLLGRLFK</sequence>